<feature type="chain" id="PRO_1000148572" description="Autonomous glycyl radical cofactor">
    <location>
        <begin position="1"/>
        <end position="125"/>
    </location>
</feature>
<feature type="domain" description="Glycine radical" evidence="1">
    <location>
        <begin position="5"/>
        <end position="125"/>
    </location>
</feature>
<feature type="modified residue" description="Glycine radical" evidence="1">
    <location>
        <position position="100"/>
    </location>
</feature>
<protein>
    <recommendedName>
        <fullName evidence="1">Autonomous glycyl radical cofactor</fullName>
    </recommendedName>
</protein>
<name>GRCA_VIBCM</name>
<keyword id="KW-0556">Organic radical</keyword>
<accession>C3LQD3</accession>
<proteinExistence type="inferred from homology"/>
<organism>
    <name type="scientific">Vibrio cholerae serotype O1 (strain M66-2)</name>
    <dbReference type="NCBI Taxonomy" id="579112"/>
    <lineage>
        <taxon>Bacteria</taxon>
        <taxon>Pseudomonadati</taxon>
        <taxon>Pseudomonadota</taxon>
        <taxon>Gammaproteobacteria</taxon>
        <taxon>Vibrionales</taxon>
        <taxon>Vibrionaceae</taxon>
        <taxon>Vibrio</taxon>
    </lineage>
</organism>
<gene>
    <name evidence="1" type="primary">grcA</name>
    <name type="ordered locus">VCM66_2284</name>
</gene>
<evidence type="ECO:0000255" key="1">
    <source>
        <dbReference type="HAMAP-Rule" id="MF_00806"/>
    </source>
</evidence>
<dbReference type="EMBL" id="CP001233">
    <property type="protein sequence ID" value="ACP06585.1"/>
    <property type="molecule type" value="Genomic_DNA"/>
</dbReference>
<dbReference type="RefSeq" id="WP_000614136.1">
    <property type="nucleotide sequence ID" value="NC_012578.1"/>
</dbReference>
<dbReference type="SMR" id="C3LQD3"/>
<dbReference type="GeneID" id="89513655"/>
<dbReference type="KEGG" id="vcm:VCM66_2284"/>
<dbReference type="HOGENOM" id="CLU_133780_0_0_6"/>
<dbReference type="Proteomes" id="UP000001217">
    <property type="component" value="Chromosome I"/>
</dbReference>
<dbReference type="GO" id="GO:0005829">
    <property type="term" value="C:cytosol"/>
    <property type="evidence" value="ECO:0007669"/>
    <property type="project" value="TreeGrafter"/>
</dbReference>
<dbReference type="GO" id="GO:0008861">
    <property type="term" value="F:formate C-acetyltransferase activity"/>
    <property type="evidence" value="ECO:0007669"/>
    <property type="project" value="TreeGrafter"/>
</dbReference>
<dbReference type="FunFam" id="3.20.70.20:FF:000002">
    <property type="entry name" value="Autonomous glycyl radical cofactor"/>
    <property type="match status" value="1"/>
</dbReference>
<dbReference type="Gene3D" id="3.20.70.20">
    <property type="match status" value="1"/>
</dbReference>
<dbReference type="HAMAP" id="MF_00806">
    <property type="entry name" value="GrcA"/>
    <property type="match status" value="1"/>
</dbReference>
<dbReference type="InterPro" id="IPR050244">
    <property type="entry name" value="Auton_GlycylRad_Cofactor"/>
</dbReference>
<dbReference type="InterPro" id="IPR019777">
    <property type="entry name" value="Form_AcTrfase_GR_CS"/>
</dbReference>
<dbReference type="InterPro" id="IPR001150">
    <property type="entry name" value="Gly_radical"/>
</dbReference>
<dbReference type="InterPro" id="IPR011140">
    <property type="entry name" value="Glycyl_radical_cofactor_GrcA"/>
</dbReference>
<dbReference type="NCBIfam" id="TIGR04365">
    <property type="entry name" value="spare_glycyl"/>
    <property type="match status" value="1"/>
</dbReference>
<dbReference type="PANTHER" id="PTHR30191">
    <property type="entry name" value="FORMATE ACETYLTRANSFERASE"/>
    <property type="match status" value="1"/>
</dbReference>
<dbReference type="PANTHER" id="PTHR30191:SF0">
    <property type="entry name" value="FORMATE ACETYLTRANSFERASE 1"/>
    <property type="match status" value="1"/>
</dbReference>
<dbReference type="Pfam" id="PF01228">
    <property type="entry name" value="Gly_radical"/>
    <property type="match status" value="1"/>
</dbReference>
<dbReference type="PIRSF" id="PIRSF000378">
    <property type="entry name" value="Gly_radicl_yfiD"/>
    <property type="match status" value="1"/>
</dbReference>
<dbReference type="SUPFAM" id="SSF51998">
    <property type="entry name" value="PFL-like glycyl radical enzymes"/>
    <property type="match status" value="1"/>
</dbReference>
<dbReference type="PROSITE" id="PS00850">
    <property type="entry name" value="GLY_RADICAL_1"/>
    <property type="match status" value="1"/>
</dbReference>
<dbReference type="PROSITE" id="PS51149">
    <property type="entry name" value="GLY_RADICAL_2"/>
    <property type="match status" value="1"/>
</dbReference>
<sequence>MIQGIQITKAANDDLLNSIWLLDSEKNEARCVAALKGFEADQVVSINDLGQFESREVAIEAAPRIEGGQHLNVNVLKRETLEDAVAHPEKYPQLTIRVSGYAVRFNSLTAEQQRDVIARTFTESL</sequence>
<comment type="function">
    <text evidence="1">Acts as a radical domain for damaged PFL and possibly other radical proteins.</text>
</comment>
<reference key="1">
    <citation type="journal article" date="2008" name="PLoS ONE">
        <title>A recalibrated molecular clock and independent origins for the cholera pandemic clones.</title>
        <authorList>
            <person name="Feng L."/>
            <person name="Reeves P.R."/>
            <person name="Lan R."/>
            <person name="Ren Y."/>
            <person name="Gao C."/>
            <person name="Zhou Z."/>
            <person name="Ren Y."/>
            <person name="Cheng J."/>
            <person name="Wang W."/>
            <person name="Wang J."/>
            <person name="Qian W."/>
            <person name="Li D."/>
            <person name="Wang L."/>
        </authorList>
    </citation>
    <scope>NUCLEOTIDE SEQUENCE [LARGE SCALE GENOMIC DNA]</scope>
    <source>
        <strain>M66-2</strain>
    </source>
</reference>